<feature type="chain" id="PRO_0000207916" description="Protein PsbN">
    <location>
        <begin position="1"/>
        <end position="43"/>
    </location>
</feature>
<feature type="transmembrane region" description="Helical" evidence="1">
    <location>
        <begin position="5"/>
        <end position="27"/>
    </location>
</feature>
<comment type="function">
    <text evidence="1">May play a role in photosystem I and II biogenesis.</text>
</comment>
<comment type="subcellular location">
    <subcellularLocation>
        <location evidence="1">Plastid</location>
        <location evidence="1">Chloroplast thylakoid membrane</location>
        <topology evidence="1">Single-pass membrane protein</topology>
    </subcellularLocation>
</comment>
<comment type="similarity">
    <text evidence="1">Belongs to the PsbN family.</text>
</comment>
<comment type="caution">
    <text evidence="1">Originally thought to be a component of PSII; based on experiments in Synechocystis, N.tabacum and barley, and its absence from PSII in T.elongatus and T.vulcanus, this is probably not true.</text>
</comment>
<proteinExistence type="inferred from homology"/>
<gene>
    <name evidence="1" type="primary">psbN</name>
</gene>
<accession>Q7J187</accession>
<accession>Q5IHE0</accession>
<name>PSBN_LIRTU</name>
<organism>
    <name type="scientific">Liriodendron tulipifera</name>
    <name type="common">Tuliptree</name>
    <name type="synonym">Tulip poplar</name>
    <dbReference type="NCBI Taxonomy" id="3415"/>
    <lineage>
        <taxon>Eukaryota</taxon>
        <taxon>Viridiplantae</taxon>
        <taxon>Streptophyta</taxon>
        <taxon>Embryophyta</taxon>
        <taxon>Tracheophyta</taxon>
        <taxon>Spermatophyta</taxon>
        <taxon>Magnoliopsida</taxon>
        <taxon>Magnoliidae</taxon>
        <taxon>Magnoliales</taxon>
        <taxon>Magnoliaceae</taxon>
        <taxon>Liriodendron</taxon>
    </lineage>
</organism>
<reference key="1">
    <citation type="journal article" date="2000" name="Am. J. Bot.">
        <title>Utility of 17 chloroplast genes for inferring the phylogeny of the basal angiosperms.</title>
        <authorList>
            <person name="Graham S.W."/>
            <person name="Olmstead R.G."/>
        </authorList>
    </citation>
    <scope>NUCLEOTIDE SEQUENCE [GENOMIC DNA]</scope>
</reference>
<reference key="2">
    <citation type="journal article" date="2005" name="Am. J. Bot.">
        <title>The tortoise and the hare II: relative utility of 21 noncoding chloroplast DNA sequences for phylogenetic analysis.</title>
        <authorList>
            <person name="Shaw J."/>
            <person name="Lickey E.B."/>
            <person name="Beck J.T."/>
            <person name="Farmer S.B."/>
            <person name="Liu W."/>
            <person name="Miller J."/>
            <person name="Siripun K.C."/>
            <person name="Winder C.T."/>
            <person name="Schilling E.E."/>
            <person name="Small R.L."/>
        </authorList>
        <dbReference type="AGRICOLA" id="IND43689705"/>
    </citation>
    <scope>NUCLEOTIDE SEQUENCE [GENOMIC DNA]</scope>
</reference>
<reference key="3">
    <citation type="journal article" date="2006" name="BMC Evol. Biol.">
        <title>Complete plastid genome sequences of Drimys, Liriodendron, and Piper: implications for the phylogenetic relationships of magnoliids.</title>
        <authorList>
            <person name="Cai Z."/>
            <person name="Penaflor C."/>
            <person name="Kuehl J.V."/>
            <person name="Leebens-Mack J."/>
            <person name="Carlson J.E."/>
            <person name="dePamphilis C.W."/>
            <person name="Boore J.L."/>
            <person name="Jansen R.K."/>
        </authorList>
    </citation>
    <scope>NUCLEOTIDE SEQUENCE [LARGE SCALE GENOMIC DNA]</scope>
</reference>
<protein>
    <recommendedName>
        <fullName evidence="1">Protein PsbN</fullName>
    </recommendedName>
</protein>
<geneLocation type="chloroplast"/>
<evidence type="ECO:0000255" key="1">
    <source>
        <dbReference type="HAMAP-Rule" id="MF_00293"/>
    </source>
</evidence>
<keyword id="KW-0150">Chloroplast</keyword>
<keyword id="KW-0472">Membrane</keyword>
<keyword id="KW-0934">Plastid</keyword>
<keyword id="KW-0793">Thylakoid</keyword>
<keyword id="KW-0812">Transmembrane</keyword>
<keyword id="KW-1133">Transmembrane helix</keyword>
<dbReference type="EMBL" id="AF123855">
    <property type="protein sequence ID" value="AAG26299.1"/>
    <property type="molecule type" value="Genomic_DNA"/>
</dbReference>
<dbReference type="EMBL" id="AY727370">
    <property type="protein sequence ID" value="AAW56503.1"/>
    <property type="molecule type" value="Genomic_DNA"/>
</dbReference>
<dbReference type="EMBL" id="DQ899947">
    <property type="protein sequence ID" value="ABI32537.1"/>
    <property type="molecule type" value="Genomic_DNA"/>
</dbReference>
<dbReference type="RefSeq" id="YP_740230.1">
    <property type="nucleotide sequence ID" value="NC_008326.1"/>
</dbReference>
<dbReference type="SMR" id="Q7J187"/>
<dbReference type="GeneID" id="4266654"/>
<dbReference type="GO" id="GO:0009535">
    <property type="term" value="C:chloroplast thylakoid membrane"/>
    <property type="evidence" value="ECO:0007669"/>
    <property type="project" value="UniProtKB-SubCell"/>
</dbReference>
<dbReference type="GO" id="GO:0015979">
    <property type="term" value="P:photosynthesis"/>
    <property type="evidence" value="ECO:0007669"/>
    <property type="project" value="InterPro"/>
</dbReference>
<dbReference type="HAMAP" id="MF_00293">
    <property type="entry name" value="PSII_PsbN"/>
    <property type="match status" value="1"/>
</dbReference>
<dbReference type="InterPro" id="IPR003398">
    <property type="entry name" value="PSII_PsbN"/>
</dbReference>
<dbReference type="PANTHER" id="PTHR35326">
    <property type="entry name" value="PROTEIN PSBN"/>
    <property type="match status" value="1"/>
</dbReference>
<dbReference type="PANTHER" id="PTHR35326:SF3">
    <property type="entry name" value="PROTEIN PSBN"/>
    <property type="match status" value="1"/>
</dbReference>
<dbReference type="Pfam" id="PF02468">
    <property type="entry name" value="PsbN"/>
    <property type="match status" value="1"/>
</dbReference>
<sequence length="43" mass="4636">METATLVAISISGSLVSFTGYALYTAFGQPSQQLRDPFEEHGD</sequence>